<dbReference type="EMBL" id="Z28296">
    <property type="protein sequence ID" value="CAA82150.1"/>
    <property type="molecule type" value="Genomic_DNA"/>
</dbReference>
<dbReference type="EMBL" id="BK006944">
    <property type="protein sequence ID" value="DAA09222.1"/>
    <property type="molecule type" value="Genomic_DNA"/>
</dbReference>
<dbReference type="PIR" id="S38148">
    <property type="entry name" value="S38148"/>
</dbReference>
<dbReference type="RefSeq" id="NP_012997.3">
    <property type="nucleotide sequence ID" value="NM_001179861.3"/>
</dbReference>
<dbReference type="PDB" id="2KM1">
    <property type="method" value="NMR"/>
    <property type="chains" value="A=1-133"/>
</dbReference>
<dbReference type="PDBsum" id="2KM1"/>
<dbReference type="BMRB" id="P36152"/>
<dbReference type="SMR" id="P36152"/>
<dbReference type="BioGRID" id="34202">
    <property type="interactions" value="43"/>
</dbReference>
<dbReference type="ComplexPortal" id="CPX-386">
    <property type="entry name" value="TAH18-DRE2 complex"/>
</dbReference>
<dbReference type="DIP" id="DIP-6716N"/>
<dbReference type="FunCoup" id="P36152">
    <property type="interactions" value="206"/>
</dbReference>
<dbReference type="IntAct" id="P36152">
    <property type="interactions" value="8"/>
</dbReference>
<dbReference type="MINT" id="P36152"/>
<dbReference type="STRING" id="4932.YKR071C"/>
<dbReference type="iPTMnet" id="P36152"/>
<dbReference type="PaxDb" id="4932-YKR071C"/>
<dbReference type="PeptideAtlas" id="P36152"/>
<dbReference type="EnsemblFungi" id="YKR071C_mRNA">
    <property type="protein sequence ID" value="YKR071C"/>
    <property type="gene ID" value="YKR071C"/>
</dbReference>
<dbReference type="GeneID" id="853945"/>
<dbReference type="KEGG" id="sce:YKR071C"/>
<dbReference type="AGR" id="SGD:S000001779"/>
<dbReference type="SGD" id="S000001779">
    <property type="gene designation" value="DRE2"/>
</dbReference>
<dbReference type="VEuPathDB" id="FungiDB:YKR071C"/>
<dbReference type="eggNOG" id="KOG4020">
    <property type="taxonomic scope" value="Eukaryota"/>
</dbReference>
<dbReference type="GeneTree" id="ENSGT00390000011417"/>
<dbReference type="HOGENOM" id="CLU_067152_0_0_1"/>
<dbReference type="InParanoid" id="P36152"/>
<dbReference type="OMA" id="TMITCGK"/>
<dbReference type="OrthoDB" id="311633at2759"/>
<dbReference type="BioCyc" id="YEAST:G3O-32037-MONOMER"/>
<dbReference type="BioGRID-ORCS" id="853945">
    <property type="hits" value="0 hits in 10 CRISPR screens"/>
</dbReference>
<dbReference type="EvolutionaryTrace" id="P36152"/>
<dbReference type="PRO" id="PR:P36152"/>
<dbReference type="Proteomes" id="UP000002311">
    <property type="component" value="Chromosome XI"/>
</dbReference>
<dbReference type="RNAct" id="P36152">
    <property type="molecule type" value="protein"/>
</dbReference>
<dbReference type="GO" id="GO:0005737">
    <property type="term" value="C:cytoplasm"/>
    <property type="evidence" value="ECO:0000314"/>
    <property type="project" value="UniProtKB"/>
</dbReference>
<dbReference type="GO" id="GO:0005829">
    <property type="term" value="C:cytosol"/>
    <property type="evidence" value="ECO:0000314"/>
    <property type="project" value="SGD"/>
</dbReference>
<dbReference type="GO" id="GO:0097361">
    <property type="term" value="C:cytosolic [4Fe-4S] assembly targeting complex"/>
    <property type="evidence" value="ECO:0000314"/>
    <property type="project" value="ComplexPortal"/>
</dbReference>
<dbReference type="GO" id="GO:0005758">
    <property type="term" value="C:mitochondrial intermembrane space"/>
    <property type="evidence" value="ECO:0000314"/>
    <property type="project" value="SGD"/>
</dbReference>
<dbReference type="GO" id="GO:0051537">
    <property type="term" value="F:2 iron, 2 sulfur cluster binding"/>
    <property type="evidence" value="ECO:0000314"/>
    <property type="project" value="UniProtKB"/>
</dbReference>
<dbReference type="GO" id="GO:0051539">
    <property type="term" value="F:4 iron, 4 sulfur cluster binding"/>
    <property type="evidence" value="ECO:0000314"/>
    <property type="project" value="UniProtKB"/>
</dbReference>
<dbReference type="GO" id="GO:0009055">
    <property type="term" value="F:electron transfer activity"/>
    <property type="evidence" value="ECO:0000315"/>
    <property type="project" value="SGD"/>
</dbReference>
<dbReference type="GO" id="GO:0046872">
    <property type="term" value="F:metal ion binding"/>
    <property type="evidence" value="ECO:0007669"/>
    <property type="project" value="UniProtKB-KW"/>
</dbReference>
<dbReference type="GO" id="GO:0060090">
    <property type="term" value="F:molecular adaptor activity"/>
    <property type="evidence" value="ECO:0000269"/>
    <property type="project" value="DisProt"/>
</dbReference>
<dbReference type="GO" id="GO:0034599">
    <property type="term" value="P:cellular response to oxidative stress"/>
    <property type="evidence" value="ECO:0000314"/>
    <property type="project" value="ComplexPortal"/>
</dbReference>
<dbReference type="GO" id="GO:0016226">
    <property type="term" value="P:iron-sulfur cluster assembly"/>
    <property type="evidence" value="ECO:0000314"/>
    <property type="project" value="ComplexPortal"/>
</dbReference>
<dbReference type="GO" id="GO:1901299">
    <property type="term" value="P:negative regulation of hydrogen peroxide-mediated programmed cell death"/>
    <property type="evidence" value="ECO:0000315"/>
    <property type="project" value="SGD"/>
</dbReference>
<dbReference type="GO" id="GO:0045019">
    <property type="term" value="P:negative regulation of nitric oxide biosynthetic process"/>
    <property type="evidence" value="ECO:0000315"/>
    <property type="project" value="SGD"/>
</dbReference>
<dbReference type="DisProt" id="DP01320"/>
<dbReference type="FunFam" id="3.40.50.11000:FF:000001">
    <property type="entry name" value="Fe-S cluster assembly protein DRE2"/>
    <property type="match status" value="1"/>
</dbReference>
<dbReference type="Gene3D" id="3.40.50.11000">
    <property type="entry name" value="Fe-S cluster assembly protein Dre2, N-terminal domain"/>
    <property type="match status" value="1"/>
</dbReference>
<dbReference type="HAMAP" id="MF_03115">
    <property type="entry name" value="Anamorsin"/>
    <property type="match status" value="1"/>
</dbReference>
<dbReference type="InterPro" id="IPR007785">
    <property type="entry name" value="Anamorsin"/>
</dbReference>
<dbReference type="InterPro" id="IPR046408">
    <property type="entry name" value="CIAPIN1"/>
</dbReference>
<dbReference type="InterPro" id="IPR031838">
    <property type="entry name" value="Dre2_N"/>
</dbReference>
<dbReference type="PANTHER" id="PTHR13273">
    <property type="entry name" value="ANAMORSIN"/>
    <property type="match status" value="1"/>
</dbReference>
<dbReference type="PANTHER" id="PTHR13273:SF14">
    <property type="entry name" value="ANAMORSIN"/>
    <property type="match status" value="1"/>
</dbReference>
<dbReference type="Pfam" id="PF05093">
    <property type="entry name" value="CIAPIN1"/>
    <property type="match status" value="1"/>
</dbReference>
<dbReference type="Pfam" id="PF16803">
    <property type="entry name" value="DRE2_N"/>
    <property type="match status" value="1"/>
</dbReference>
<feature type="chain" id="PRO_0000203219" description="Fe-S cluster assembly protein DRE2">
    <location>
        <begin position="1"/>
        <end position="348"/>
    </location>
</feature>
<feature type="region of interest" description="N-terminal SAM-like domain" evidence="2 19">
    <location>
        <begin position="1"/>
        <end position="158"/>
    </location>
</feature>
<feature type="region of interest" description="Disordered" evidence="3">
    <location>
        <begin position="137"/>
        <end position="170"/>
    </location>
</feature>
<feature type="region of interest" description="Linker" evidence="2 18">
    <location>
        <begin position="159"/>
        <end position="242"/>
    </location>
</feature>
<feature type="region of interest" description="Fe-S binding site A" evidence="2 18">
    <location>
        <begin position="252"/>
        <end position="268"/>
    </location>
</feature>
<feature type="region of interest" description="Fe-S binding site B" evidence="2 18">
    <location>
        <begin position="311"/>
        <end position="325"/>
    </location>
</feature>
<feature type="short sequence motif" description="Cx2C motif 1" evidence="2 18">
    <location>
        <begin position="311"/>
        <end position="314"/>
    </location>
</feature>
<feature type="short sequence motif" description="Cx2C motif 2" evidence="2 18">
    <location>
        <begin position="322"/>
        <end position="325"/>
    </location>
</feature>
<feature type="compositionally biased region" description="Polar residues" evidence="3">
    <location>
        <begin position="144"/>
        <end position="163"/>
    </location>
</feature>
<feature type="binding site" evidence="2 16">
    <location>
        <position position="252"/>
    </location>
    <ligand>
        <name>[2Fe-2S] cluster</name>
        <dbReference type="ChEBI" id="CHEBI:190135"/>
    </ligand>
</feature>
<feature type="binding site" evidence="2 16">
    <location>
        <position position="263"/>
    </location>
    <ligand>
        <name>[2Fe-2S] cluster</name>
        <dbReference type="ChEBI" id="CHEBI:190135"/>
    </ligand>
</feature>
<feature type="binding site" evidence="2 16">
    <location>
        <position position="266"/>
    </location>
    <ligand>
        <name>[2Fe-2S] cluster</name>
        <dbReference type="ChEBI" id="CHEBI:190135"/>
    </ligand>
</feature>
<feature type="binding site" evidence="2 16">
    <location>
        <position position="268"/>
    </location>
    <ligand>
        <name>[2Fe-2S] cluster</name>
        <dbReference type="ChEBI" id="CHEBI:190135"/>
    </ligand>
</feature>
<feature type="binding site" evidence="2 16">
    <location>
        <position position="311"/>
    </location>
    <ligand>
        <name>[4Fe-4S] cluster</name>
        <dbReference type="ChEBI" id="CHEBI:49883"/>
    </ligand>
</feature>
<feature type="binding site" evidence="2 16">
    <location>
        <position position="314"/>
    </location>
    <ligand>
        <name>[4Fe-4S] cluster</name>
        <dbReference type="ChEBI" id="CHEBI:49883"/>
    </ligand>
</feature>
<feature type="binding site" evidence="2 16">
    <location>
        <position position="322"/>
    </location>
    <ligand>
        <name>[4Fe-4S] cluster</name>
        <dbReference type="ChEBI" id="CHEBI:49883"/>
    </ligand>
</feature>
<feature type="binding site" evidence="2 16">
    <location>
        <position position="325"/>
    </location>
    <ligand>
        <name>[4Fe-4S] cluster</name>
        <dbReference type="ChEBI" id="CHEBI:49883"/>
    </ligand>
</feature>
<feature type="modified residue" description="Phosphoserine" evidence="22 23 24">
    <location>
        <position position="206"/>
    </location>
</feature>
<feature type="strand" evidence="25">
    <location>
        <begin position="5"/>
        <end position="11"/>
    </location>
</feature>
<feature type="helix" evidence="25">
    <location>
        <begin position="13"/>
        <end position="16"/>
    </location>
</feature>
<feature type="helix" evidence="25">
    <location>
        <begin position="19"/>
        <end position="31"/>
    </location>
</feature>
<feature type="strand" evidence="25">
    <location>
        <begin position="34"/>
        <end position="41"/>
    </location>
</feature>
<feature type="helix" evidence="25">
    <location>
        <begin position="42"/>
        <end position="47"/>
    </location>
</feature>
<feature type="strand" evidence="25">
    <location>
        <begin position="54"/>
        <end position="56"/>
    </location>
</feature>
<feature type="strand" evidence="25">
    <location>
        <begin position="59"/>
        <end position="63"/>
    </location>
</feature>
<feature type="helix" evidence="25">
    <location>
        <begin position="75"/>
        <end position="82"/>
    </location>
</feature>
<feature type="helix" evidence="25">
    <location>
        <begin position="96"/>
        <end position="105"/>
    </location>
</feature>
<feature type="strand" evidence="25">
    <location>
        <begin position="107"/>
        <end position="110"/>
    </location>
</feature>
<feature type="strand" evidence="25">
    <location>
        <begin position="112"/>
        <end position="114"/>
    </location>
</feature>
<feature type="strand" evidence="25">
    <location>
        <begin position="116"/>
        <end position="119"/>
    </location>
</feature>
<evidence type="ECO:0000250" key="1">
    <source>
        <dbReference type="UniProtKB" id="Q6FI81"/>
    </source>
</evidence>
<evidence type="ECO:0000255" key="2">
    <source>
        <dbReference type="HAMAP-Rule" id="MF_03115"/>
    </source>
</evidence>
<evidence type="ECO:0000256" key="3">
    <source>
        <dbReference type="SAM" id="MobiDB-lite"/>
    </source>
</evidence>
<evidence type="ECO:0000269" key="4">
    <source>
    </source>
</evidence>
<evidence type="ECO:0000269" key="5">
    <source>
    </source>
</evidence>
<evidence type="ECO:0000269" key="6">
    <source>
    </source>
</evidence>
<evidence type="ECO:0000269" key="7">
    <source>
    </source>
</evidence>
<evidence type="ECO:0000269" key="8">
    <source>
    </source>
</evidence>
<evidence type="ECO:0000269" key="9">
    <source>
    </source>
</evidence>
<evidence type="ECO:0000269" key="10">
    <source>
    </source>
</evidence>
<evidence type="ECO:0000269" key="11">
    <source>
    </source>
</evidence>
<evidence type="ECO:0000269" key="12">
    <source>
    </source>
</evidence>
<evidence type="ECO:0000269" key="13">
    <source>
    </source>
</evidence>
<evidence type="ECO:0000269" key="14">
    <source>
    </source>
</evidence>
<evidence type="ECO:0000269" key="15">
    <source>
    </source>
</evidence>
<evidence type="ECO:0000269" key="16">
    <source>
    </source>
</evidence>
<evidence type="ECO:0000269" key="17">
    <source>
    </source>
</evidence>
<evidence type="ECO:0000305" key="18"/>
<evidence type="ECO:0000305" key="19">
    <source>
    </source>
</evidence>
<evidence type="ECO:0000305" key="20">
    <source>
    </source>
</evidence>
<evidence type="ECO:0000305" key="21">
    <source>
    </source>
</evidence>
<evidence type="ECO:0007744" key="22">
    <source>
    </source>
</evidence>
<evidence type="ECO:0007744" key="23">
    <source>
    </source>
</evidence>
<evidence type="ECO:0007744" key="24">
    <source>
    </source>
</evidence>
<evidence type="ECO:0007829" key="25">
    <source>
        <dbReference type="PDB" id="2KM1"/>
    </source>
</evidence>
<name>DRE2_YEAST</name>
<proteinExistence type="evidence at protein level"/>
<sequence length="348" mass="38543">MSQYKTGLLLIHPAVTTTPELVENTKAQAASKKVKFVDQFLINKLNDGSITLENAKYETVHYLTPEAQTDIKFPKKLISVLADSLKPNGSLIGLSDIYKVDALINGFEIINEPDYCWIKMDSSKLNQTVSIPLKKKKTNNTKLQSGSKLPTFKKASSSTSNLPSFKKADHSRQPIVKETDSFKPPSFKMTTEPKVYRVVDDLIEDSDDDDFSSDSSKAQYFDQVDTSDDSIEEEELIDEDGSGKSMITMITCGKSKTKKKKACKDCTCGMKEQEENEINDIRSQQDKVVKFTEDELTEIDFTIDGKKVGGCGSCSLGDAFRCSGCPYLGLPAFKPGQPINLDSISDDL</sequence>
<reference key="1">
    <citation type="journal article" date="1994" name="Nature">
        <title>Complete DNA sequence of yeast chromosome XI.</title>
        <authorList>
            <person name="Dujon B."/>
            <person name="Alexandraki D."/>
            <person name="Andre B."/>
            <person name="Ansorge W."/>
            <person name="Baladron V."/>
            <person name="Ballesta J.P.G."/>
            <person name="Banrevi A."/>
            <person name="Bolle P.-A."/>
            <person name="Bolotin-Fukuhara M."/>
            <person name="Bossier P."/>
            <person name="Bou G."/>
            <person name="Boyer J."/>
            <person name="Buitrago M.J."/>
            <person name="Cheret G."/>
            <person name="Colleaux L."/>
            <person name="Daignan-Fornier B."/>
            <person name="del Rey F."/>
            <person name="Dion C."/>
            <person name="Domdey H."/>
            <person name="Duesterhoeft A."/>
            <person name="Duesterhus S."/>
            <person name="Entian K.-D."/>
            <person name="Erfle H."/>
            <person name="Esteban P.F."/>
            <person name="Feldmann H."/>
            <person name="Fernandes L."/>
            <person name="Fobo G.M."/>
            <person name="Fritz C."/>
            <person name="Fukuhara H."/>
            <person name="Gabel C."/>
            <person name="Gaillon L."/>
            <person name="Garcia-Cantalejo J.M."/>
            <person name="Garcia-Ramirez J.J."/>
            <person name="Gent M.E."/>
            <person name="Ghazvini M."/>
            <person name="Goffeau A."/>
            <person name="Gonzalez A."/>
            <person name="Grothues D."/>
            <person name="Guerreiro P."/>
            <person name="Hegemann J.H."/>
            <person name="Hewitt N."/>
            <person name="Hilger F."/>
            <person name="Hollenberg C.P."/>
            <person name="Horaitis O."/>
            <person name="Indge K.J."/>
            <person name="Jacquier A."/>
            <person name="James C.M."/>
            <person name="Jauniaux J.-C."/>
            <person name="Jimenez A."/>
            <person name="Keuchel H."/>
            <person name="Kirchrath L."/>
            <person name="Kleine K."/>
            <person name="Koetter P."/>
            <person name="Legrain P."/>
            <person name="Liebl S."/>
            <person name="Louis E.J."/>
            <person name="Maia e Silva A."/>
            <person name="Marck C."/>
            <person name="Monnier A.-L."/>
            <person name="Moestl D."/>
            <person name="Mueller S."/>
            <person name="Obermaier B."/>
            <person name="Oliver S.G."/>
            <person name="Pallier C."/>
            <person name="Pascolo S."/>
            <person name="Pfeiffer F."/>
            <person name="Philippsen P."/>
            <person name="Planta R.J."/>
            <person name="Pohl F.M."/>
            <person name="Pohl T.M."/>
            <person name="Poehlmann R."/>
            <person name="Portetelle D."/>
            <person name="Purnelle B."/>
            <person name="Puzos V."/>
            <person name="Ramezani Rad M."/>
            <person name="Rasmussen S.W."/>
            <person name="Remacha M.A."/>
            <person name="Revuelta J.L."/>
            <person name="Richard G.-F."/>
            <person name="Rieger M."/>
            <person name="Rodrigues-Pousada C."/>
            <person name="Rose M."/>
            <person name="Rupp T."/>
            <person name="Santos M.A."/>
            <person name="Schwager C."/>
            <person name="Sensen C."/>
            <person name="Skala J."/>
            <person name="Soares H."/>
            <person name="Sor F."/>
            <person name="Stegemann J."/>
            <person name="Tettelin H."/>
            <person name="Thierry A."/>
            <person name="Tzermia M."/>
            <person name="Urrestarazu L.A."/>
            <person name="van Dyck L."/>
            <person name="van Vliet-Reedijk J.C."/>
            <person name="Valens M."/>
            <person name="Vandenbol M."/>
            <person name="Vilela C."/>
            <person name="Vissers S."/>
            <person name="von Wettstein D."/>
            <person name="Voss H."/>
            <person name="Wiemann S."/>
            <person name="Xu G."/>
            <person name="Zimmermann J."/>
            <person name="Haasemann M."/>
            <person name="Becker I."/>
            <person name="Mewes H.-W."/>
        </authorList>
    </citation>
    <scope>NUCLEOTIDE SEQUENCE [LARGE SCALE GENOMIC DNA]</scope>
    <source>
        <strain>ATCC 204508 / S288c</strain>
    </source>
</reference>
<reference key="2">
    <citation type="journal article" date="2014" name="G3 (Bethesda)">
        <title>The reference genome sequence of Saccharomyces cerevisiae: Then and now.</title>
        <authorList>
            <person name="Engel S.R."/>
            <person name="Dietrich F.S."/>
            <person name="Fisk D.G."/>
            <person name="Binkley G."/>
            <person name="Balakrishnan R."/>
            <person name="Costanzo M.C."/>
            <person name="Dwight S.S."/>
            <person name="Hitz B.C."/>
            <person name="Karra K."/>
            <person name="Nash R.S."/>
            <person name="Weng S."/>
            <person name="Wong E.D."/>
            <person name="Lloyd P."/>
            <person name="Skrzypek M.S."/>
            <person name="Miyasato S.R."/>
            <person name="Simison M."/>
            <person name="Cherry J.M."/>
        </authorList>
    </citation>
    <scope>GENOME REANNOTATION</scope>
    <source>
        <strain>ATCC 204508 / S288c</strain>
    </source>
</reference>
<reference key="3">
    <citation type="journal article" date="2003" name="Curr. Genet.">
        <title>Characterization of mutations that are synthetic lethal with pol3-13, a mutated allele of DNA polymerase delta in Saccharomyces cerevisiae.</title>
        <authorList>
            <person name="Chanet R."/>
            <person name="Heude M."/>
        </authorList>
    </citation>
    <scope>FUNCTION</scope>
</reference>
<reference key="4">
    <citation type="journal article" date="2003" name="Nature">
        <title>Global analysis of protein localization in budding yeast.</title>
        <authorList>
            <person name="Huh W.-K."/>
            <person name="Falvo J.V."/>
            <person name="Gerke L.C."/>
            <person name="Carroll A.S."/>
            <person name="Howson R.W."/>
            <person name="Weissman J.S."/>
            <person name="O'Shea E.K."/>
        </authorList>
    </citation>
    <scope>SUBCELLULAR LOCATION [LARGE SCALE ANALYSIS]</scope>
</reference>
<reference key="5">
    <citation type="journal article" date="2003" name="Nature">
        <title>Global analysis of protein expression in yeast.</title>
        <authorList>
            <person name="Ghaemmaghami S."/>
            <person name="Huh W.-K."/>
            <person name="Bower K."/>
            <person name="Howson R.W."/>
            <person name="Belle A."/>
            <person name="Dephoure N."/>
            <person name="O'Shea E.K."/>
            <person name="Weissman J.S."/>
        </authorList>
    </citation>
    <scope>LEVEL OF PROTEIN EXPRESSION [LARGE SCALE ANALYSIS]</scope>
</reference>
<reference key="6">
    <citation type="journal article" date="2006" name="Mol. Cell. Proteomics">
        <title>A tandem affinity tag for two-step purification under fully denaturing conditions: application in ubiquitin profiling and protein complex identification combined with in vivocross-linking.</title>
        <authorList>
            <person name="Tagwerker C."/>
            <person name="Flick K."/>
            <person name="Cui M."/>
            <person name="Guerrero C."/>
            <person name="Dou Y."/>
            <person name="Auer B."/>
            <person name="Baldi P."/>
            <person name="Huang L."/>
            <person name="Kaiser P."/>
        </authorList>
    </citation>
    <scope>UBIQUITINATION</scope>
    <scope>IDENTIFICATION BY MASS SPECTROMETRY</scope>
</reference>
<reference key="7">
    <citation type="journal article" date="2007" name="J. Proteome Res.">
        <title>Large-scale phosphorylation analysis of alpha-factor-arrested Saccharomyces cerevisiae.</title>
        <authorList>
            <person name="Li X."/>
            <person name="Gerber S.A."/>
            <person name="Rudner A.D."/>
            <person name="Beausoleil S.A."/>
            <person name="Haas W."/>
            <person name="Villen J."/>
            <person name="Elias J.E."/>
            <person name="Gygi S.P."/>
        </authorList>
    </citation>
    <scope>PHOSPHORYLATION [LARGE SCALE ANALYSIS] AT SER-206</scope>
    <scope>IDENTIFICATION BY MASS SPECTROMETRY [LARGE SCALE ANALYSIS]</scope>
    <source>
        <strain>ADR376</strain>
    </source>
</reference>
<reference key="8">
    <citation type="journal article" date="2008" name="Mol. Cell. Biol.">
        <title>Dre2, a conserved eukaryotic Fe/S cluster protein, functions in cytosolic Fe/S protein biogenesis.</title>
        <authorList>
            <person name="Zhang Y."/>
            <person name="Lyver E.R."/>
            <person name="Nakamaru-Ogiso E."/>
            <person name="Yoon H."/>
            <person name="Amutha B."/>
            <person name="Lee D.W."/>
            <person name="Bi E."/>
            <person name="Ohnishi T."/>
            <person name="Daldal F."/>
            <person name="Pain D."/>
            <person name="Dancis A."/>
        </authorList>
    </citation>
    <scope>FUNCTION</scope>
    <scope>SUBCELLULAR LOCATION</scope>
    <scope>COFACTOR</scope>
    <scope>DISRUPTION PHENOTYPE</scope>
</reference>
<reference key="9">
    <citation type="journal article" date="2008" name="Mol. Cell. Proteomics">
        <title>A multidimensional chromatography technology for in-depth phosphoproteome analysis.</title>
        <authorList>
            <person name="Albuquerque C.P."/>
            <person name="Smolka M.B."/>
            <person name="Payne S.H."/>
            <person name="Bafna V."/>
            <person name="Eng J."/>
            <person name="Zhou H."/>
        </authorList>
    </citation>
    <scope>PHOSPHORYLATION [LARGE SCALE ANALYSIS] AT SER-206</scope>
    <scope>IDENTIFICATION BY MASS SPECTROMETRY [LARGE SCALE ANALYSIS]</scope>
</reference>
<reference key="10">
    <citation type="journal article" date="2009" name="PLoS ONE">
        <title>A newly identified essential complex, Dre2-Tah18, controls mitochondria integrity and cell death after oxidative stress in yeast.</title>
        <authorList>
            <person name="Vernis L."/>
            <person name="Facca C."/>
            <person name="Delagoutte E."/>
            <person name="Soler N."/>
            <person name="Chanet R."/>
            <person name="Guiard B."/>
            <person name="Faye G."/>
            <person name="Baldacci G."/>
        </authorList>
    </citation>
    <scope>FUNCTION IN APOPTOSIS</scope>
    <scope>INTERACTION WITH TAH18</scope>
</reference>
<reference key="11">
    <citation type="journal article" date="2009" name="Science">
        <title>Global analysis of Cdk1 substrate phosphorylation sites provides insights into evolution.</title>
        <authorList>
            <person name="Holt L.J."/>
            <person name="Tuch B.B."/>
            <person name="Villen J."/>
            <person name="Johnson A.D."/>
            <person name="Gygi S.P."/>
            <person name="Morgan D.O."/>
        </authorList>
    </citation>
    <scope>PHOSPHORYLATION [LARGE SCALE ANALYSIS] AT SER-206</scope>
    <scope>IDENTIFICATION BY MASS SPECTROMETRY [LARGE SCALE ANALYSIS]</scope>
</reference>
<reference key="12">
    <citation type="journal article" date="2010" name="Nat. Chem. Biol.">
        <title>Tah18 transfers electrons to Dre2 in cytosolic iron-sulfur protein biogenesis.</title>
        <authorList>
            <person name="Netz D.J."/>
            <person name="Stumpfig M."/>
            <person name="Dore C."/>
            <person name="Muhlenhoff U."/>
            <person name="Pierik A.J."/>
            <person name="Lill R."/>
        </authorList>
    </citation>
    <scope>FUNCTION</scope>
    <scope>COFACTOR</scope>
</reference>
<reference key="13">
    <citation type="journal article" date="2011" name="Chem. Biol.">
        <title>Anamorsin is a [2Fe-2S] cluster-containing substrate of the Mia40-dependent mitochondrial protein trapping machinery.</title>
        <authorList>
            <person name="Banci L."/>
            <person name="Bertini I."/>
            <person name="Ciofi-Baffoni S."/>
            <person name="Boscaro F."/>
            <person name="Chatzi A."/>
            <person name="Mikolajczyk M."/>
            <person name="Tokatlidis K."/>
            <person name="Winkelmann J."/>
        </authorList>
    </citation>
    <scope>SUBCELLULAR LOCATION</scope>
    <scope>INTERACTION WITH MIA40</scope>
</reference>
<reference key="14">
    <citation type="journal article" date="2011" name="J. Biol. Chem.">
        <title>Investigation of in vivo diferric tyrosyl radical formation in Saccharomyces cerevisiae Rnr2 protein: requirement of Rnr4 and contribution of Grx3/4 and Dre2 proteins.</title>
        <authorList>
            <person name="Zhang Y."/>
            <person name="Liu L."/>
            <person name="Wu X."/>
            <person name="An X."/>
            <person name="Stubbe J."/>
            <person name="Huang M."/>
        </authorList>
    </citation>
    <scope>FUNCTION</scope>
</reference>
<reference key="15">
    <citation type="journal article" date="2011" name="Mol. Microbiol.">
        <title>Interaction between the reductase Tah18 and highly conserved Fe-S containing Dre2 C-terminus is essential for yeast viability.</title>
        <authorList>
            <person name="Soler N."/>
            <person name="Delagoutte E."/>
            <person name="Miron S."/>
            <person name="Facca C."/>
            <person name="Baille D."/>
            <person name="d'Autreaux B."/>
            <person name="Craescu G."/>
            <person name="Frapart Y.M."/>
            <person name="Mansuy D."/>
            <person name="Baldacci G."/>
            <person name="Huang M.E."/>
            <person name="Vernis L."/>
        </authorList>
    </citation>
    <scope>FUNCTION</scope>
    <scope>INTERACTION WITH TAH18</scope>
</reference>
<reference key="16">
    <citation type="journal article" date="2014" name="Proc. Natl. Acad. Sci. U.S.A.">
        <title>Conserved electron donor complex Dre2-Tah18 is required for ribonucleotide reductase metallocofactor assembly and DNA synthesis.</title>
        <authorList>
            <person name="Zhang Y."/>
            <person name="Li H."/>
            <person name="Zhang C."/>
            <person name="An X."/>
            <person name="Liu L."/>
            <person name="Stubbe J."/>
            <person name="Huang M."/>
        </authorList>
    </citation>
    <scope>FUNCTION</scope>
</reference>
<reference key="17">
    <citation type="journal article" date="2016" name="Biochem. J.">
        <title>The conserved protein Dre2 uses essential [2Fe-2S] and [4Fe-4S] clusters for its function in cytosolic iron-sulfur protein assembly.</title>
        <authorList>
            <person name="Netz D.J."/>
            <person name="Genau H.M."/>
            <person name="Weiler B.D."/>
            <person name="Bill E."/>
            <person name="Pierik A.J."/>
            <person name="Lill R."/>
        </authorList>
    </citation>
    <scope>COFACTOR</scope>
</reference>
<reference key="18">
    <citation type="journal article" date="2017" name="J. Biochem.">
        <title>EPR studies of wild type and mutant Dre2 identify essential [2Fe--2S] and [4Fe--4S] clusters and their cysteine ligands.</title>
        <authorList>
            <person name="Zhang Y."/>
            <person name="Yang C."/>
            <person name="Dancis A."/>
            <person name="Nakamaru-Ogiso E."/>
        </authorList>
    </citation>
    <scope>COFACTOR</scope>
</reference>
<reference key="19">
    <citation type="journal article" date="2019" name="J. Biol. Chem.">
        <title>Mitochondria export iron-sulfur and sulfur intermediates to the cytoplasm for iron-sulfur cluster assembly and tRNA thiolation in yeast.</title>
        <authorList>
            <person name="Pandey A.K."/>
            <person name="Pain J."/>
            <person name="Dancis A."/>
            <person name="Pain D."/>
        </authorList>
    </citation>
    <scope>FUNCTION</scope>
    <scope>DISRUPTION PHENOTYPE</scope>
</reference>
<reference key="20">
    <citation type="journal article" date="2012" name="FEBS J.">
        <title>A S-adenosylmethionine methyltransferase-like domain within the essential, Fe-S-containing yeast protein Dre2.</title>
        <authorList>
            <person name="Soler N."/>
            <person name="Craescu C.T."/>
            <person name="Gallay J."/>
            <person name="Frapart Y.M."/>
            <person name="Mansuy D."/>
            <person name="Raynal B."/>
            <person name="Baldacci G."/>
            <person name="Pastore A."/>
            <person name="Huang M.E."/>
            <person name="Vernis L."/>
        </authorList>
    </citation>
    <scope>STRUCTURE BY NMR OF 1-133</scope>
    <scope>DOMAIN</scope>
    <scope>COFACTOR</scope>
</reference>
<keyword id="KW-0001">2Fe-2S</keyword>
<keyword id="KW-0002">3D-structure</keyword>
<keyword id="KW-0004">4Fe-4S</keyword>
<keyword id="KW-0963">Cytoplasm</keyword>
<keyword id="KW-0408">Iron</keyword>
<keyword id="KW-0411">Iron-sulfur</keyword>
<keyword id="KW-0479">Metal-binding</keyword>
<keyword id="KW-0496">Mitochondrion</keyword>
<keyword id="KW-0597">Phosphoprotein</keyword>
<keyword id="KW-1185">Reference proteome</keyword>
<keyword id="KW-0832">Ubl conjugation</keyword>
<comment type="function">
    <text evidence="2 4 7 8 9 11 12 14 17">Component of the cytosolic iron-sulfur (Fe-S) protein assembly (CIA) machinery required for the maturation of extramitochondrial Fe-S proteins (PubMed:18625724, PubMed:19194512, PubMed:20802492, PubMed:21902732, PubMed:31040179). Part of an electron transfer chain functioning in an early step of cytosolic Fe-S biogenesis, facilitating the de novo assembly of a [4Fe-4S] cluster on the scaffold complex CFD1-NBP35. Electrons are transferred to DRE2 from NADPH via the FAD- and FMN-containing protein TAH18 (PubMed:20802492). TAH18-DRE2 are also required for the assembly of the diferric tyrosyl radical cofactor of ribonucleotide reductase (RNR), probably by providing electrons for reduction during radical cofactor maturation in the catalytic small subunit RNR2 (PubMed:21931161, PubMed:24733891). Has anti-apoptotic effects in the cell. Involved in negative control of H(2)O(2)-induced cell death (PubMed:19194512).</text>
</comment>
<comment type="cofactor">
    <cofactor evidence="2 7 9 13">
        <name>[2Fe-2S] cluster</name>
        <dbReference type="ChEBI" id="CHEBI:190135"/>
    </cofactor>
</comment>
<comment type="cofactor">
    <cofactor evidence="2 15 16">
        <name>[4Fe-4S] cluster</name>
        <dbReference type="ChEBI" id="CHEBI:49883"/>
    </cofactor>
    <text evidence="20 21">In the presence of oxygen, the A site-bound [2Fe-2S] cluster is labile and the B site-bound [4Fe-4S] cluster is readily converted into a [2Fe-2S] cluster, a reason why recombinant protein is often isolated with a single [2Fe-2S] cluster.</text>
</comment>
<comment type="subunit">
    <text evidence="1 2 8 10 11">Monomer (By similarity). Interacts with TAH18 (PubMed:19194512, PubMed:21902732). Interacts with MIA40 (PubMed:21700214).</text>
</comment>
<comment type="interaction">
    <interactant intactId="EBI-26482">
        <id>P36152</id>
    </interactant>
    <interactant intactId="EBI-37624">
        <id>Q12181</id>
        <label>TAH18</label>
    </interactant>
    <organismsDiffer>false</organismsDiffer>
    <experiments>5</experiments>
</comment>
<comment type="subcellular location">
    <subcellularLocation>
        <location evidence="2 7 10">Cytoplasm</location>
    </subcellularLocation>
    <subcellularLocation>
        <location evidence="2 7 10">Mitochondrion intermembrane space</location>
    </subcellularLocation>
</comment>
<comment type="domain">
    <text evidence="2 13 15">The N-terminal domain has structural similarity with S-adenosyl-L-methionine-dependent methyltransferases, but does not bind S-adenosyl-L-methionine (PubMed:22487307). It is required for correct assembly of the 2 Fe-S clusters (PubMed:27166425).</text>
</comment>
<comment type="domain">
    <text evidence="2 13">The C-terminal domain binds 2 Fe-S clusters but is otherwise mostly in an intrinsically disordered conformation.</text>
</comment>
<comment type="domain">
    <text evidence="2 10">The twin Cx2C motifs are involved in the recognition by the mitochondrial MIA40-ERV1 disulfide relay system. The formation of 2 disulfide bonds in the Cx2C motifs through dithiol/disulfide exchange reactions effectively traps the protein in the mitochondrial intermembrane space.</text>
</comment>
<comment type="PTM">
    <text evidence="6">Ubiquitinated.</text>
</comment>
<comment type="disruption phenotype">
    <text evidence="7 17">Inviable (PubMed:18625724). Decreases cytosolic iron-sulfur (Fe-S) protein assembly (PubMed:31040179).</text>
</comment>
<comment type="miscellaneous">
    <text evidence="5">Present with 1050 molecules/cell in log phase SD medium.</text>
</comment>
<comment type="similarity">
    <text evidence="2">Belongs to the anamorsin family.</text>
</comment>
<gene>
    <name evidence="2" type="primary">DRE2</name>
    <name type="ordered locus">YKR071C</name>
</gene>
<protein>
    <recommendedName>
        <fullName evidence="2">Fe-S cluster assembly protein DRE2</fullName>
    </recommendedName>
    <alternativeName>
        <fullName evidence="2">Anamorsin homolog</fullName>
    </alternativeName>
</protein>
<organism>
    <name type="scientific">Saccharomyces cerevisiae (strain ATCC 204508 / S288c)</name>
    <name type="common">Baker's yeast</name>
    <dbReference type="NCBI Taxonomy" id="559292"/>
    <lineage>
        <taxon>Eukaryota</taxon>
        <taxon>Fungi</taxon>
        <taxon>Dikarya</taxon>
        <taxon>Ascomycota</taxon>
        <taxon>Saccharomycotina</taxon>
        <taxon>Saccharomycetes</taxon>
        <taxon>Saccharomycetales</taxon>
        <taxon>Saccharomycetaceae</taxon>
        <taxon>Saccharomyces</taxon>
    </lineage>
</organism>
<accession>P36152</accession>
<accession>D6VXD2</accession>